<evidence type="ECO:0000255" key="1">
    <source>
        <dbReference type="HAMAP-Rule" id="MF_01810"/>
    </source>
</evidence>
<evidence type="ECO:0000256" key="2">
    <source>
        <dbReference type="SAM" id="MobiDB-lite"/>
    </source>
</evidence>
<proteinExistence type="inferred from homology"/>
<keyword id="KW-0997">Cell inner membrane</keyword>
<keyword id="KW-1003">Cell membrane</keyword>
<keyword id="KW-0143">Chaperone</keyword>
<keyword id="KW-0472">Membrane</keyword>
<keyword id="KW-0653">Protein transport</keyword>
<keyword id="KW-0812">Transmembrane</keyword>
<keyword id="KW-1133">Transmembrane helix</keyword>
<keyword id="KW-0813">Transport</keyword>
<dbReference type="EMBL" id="CU928162">
    <property type="protein sequence ID" value="CAR10381.1"/>
    <property type="molecule type" value="Genomic_DNA"/>
</dbReference>
<dbReference type="RefSeq" id="WP_000378258.1">
    <property type="nucleotide sequence ID" value="NC_011745.1"/>
</dbReference>
<dbReference type="SMR" id="B7N210"/>
<dbReference type="GeneID" id="93778448"/>
<dbReference type="KEGG" id="ecq:ECED1_4397"/>
<dbReference type="HOGENOM" id="CLU_016535_3_0_6"/>
<dbReference type="Proteomes" id="UP000000748">
    <property type="component" value="Chromosome"/>
</dbReference>
<dbReference type="GO" id="GO:0005886">
    <property type="term" value="C:plasma membrane"/>
    <property type="evidence" value="ECO:0007669"/>
    <property type="project" value="UniProtKB-SubCell"/>
</dbReference>
<dbReference type="GO" id="GO:0032977">
    <property type="term" value="F:membrane insertase activity"/>
    <property type="evidence" value="ECO:0007669"/>
    <property type="project" value="InterPro"/>
</dbReference>
<dbReference type="GO" id="GO:0051205">
    <property type="term" value="P:protein insertion into membrane"/>
    <property type="evidence" value="ECO:0007669"/>
    <property type="project" value="TreeGrafter"/>
</dbReference>
<dbReference type="GO" id="GO:0015031">
    <property type="term" value="P:protein transport"/>
    <property type="evidence" value="ECO:0007669"/>
    <property type="project" value="UniProtKB-KW"/>
</dbReference>
<dbReference type="CDD" id="cd20070">
    <property type="entry name" value="5TM_YidC_Alb3"/>
    <property type="match status" value="1"/>
</dbReference>
<dbReference type="CDD" id="cd19961">
    <property type="entry name" value="EcYidC-like_peri"/>
    <property type="match status" value="1"/>
</dbReference>
<dbReference type="FunFam" id="2.70.98.90:FF:000001">
    <property type="entry name" value="Membrane protein insertase YidC"/>
    <property type="match status" value="1"/>
</dbReference>
<dbReference type="Gene3D" id="2.70.98.90">
    <property type="match status" value="1"/>
</dbReference>
<dbReference type="HAMAP" id="MF_01810">
    <property type="entry name" value="YidC_type1"/>
    <property type="match status" value="1"/>
</dbReference>
<dbReference type="InterPro" id="IPR019998">
    <property type="entry name" value="Membr_insert_YidC"/>
</dbReference>
<dbReference type="InterPro" id="IPR028053">
    <property type="entry name" value="Membr_insert_YidC_N"/>
</dbReference>
<dbReference type="InterPro" id="IPR001708">
    <property type="entry name" value="YidC/ALB3/OXA1/COX18"/>
</dbReference>
<dbReference type="InterPro" id="IPR028055">
    <property type="entry name" value="YidC/Oxa/ALB_C"/>
</dbReference>
<dbReference type="InterPro" id="IPR047196">
    <property type="entry name" value="YidC_ALB_C"/>
</dbReference>
<dbReference type="InterPro" id="IPR038221">
    <property type="entry name" value="YidC_periplasmic_sf"/>
</dbReference>
<dbReference type="NCBIfam" id="NF002351">
    <property type="entry name" value="PRK01318.1-1"/>
    <property type="match status" value="1"/>
</dbReference>
<dbReference type="NCBIfam" id="NF002352">
    <property type="entry name" value="PRK01318.1-3"/>
    <property type="match status" value="1"/>
</dbReference>
<dbReference type="NCBIfam" id="NF002353">
    <property type="entry name" value="PRK01318.1-4"/>
    <property type="match status" value="1"/>
</dbReference>
<dbReference type="NCBIfam" id="TIGR03593">
    <property type="entry name" value="yidC_nterm"/>
    <property type="match status" value="1"/>
</dbReference>
<dbReference type="NCBIfam" id="TIGR03592">
    <property type="entry name" value="yidC_oxa1_cterm"/>
    <property type="match status" value="1"/>
</dbReference>
<dbReference type="PANTHER" id="PTHR12428:SF65">
    <property type="entry name" value="CYTOCHROME C OXIDASE ASSEMBLY PROTEIN COX18, MITOCHONDRIAL"/>
    <property type="match status" value="1"/>
</dbReference>
<dbReference type="PANTHER" id="PTHR12428">
    <property type="entry name" value="OXA1"/>
    <property type="match status" value="1"/>
</dbReference>
<dbReference type="Pfam" id="PF02096">
    <property type="entry name" value="60KD_IMP"/>
    <property type="match status" value="1"/>
</dbReference>
<dbReference type="Pfam" id="PF14849">
    <property type="entry name" value="YidC_periplas"/>
    <property type="match status" value="1"/>
</dbReference>
<dbReference type="PRINTS" id="PR00701">
    <property type="entry name" value="60KDINNERMP"/>
</dbReference>
<dbReference type="PRINTS" id="PR01900">
    <property type="entry name" value="YIDCPROTEIN"/>
</dbReference>
<reference key="1">
    <citation type="journal article" date="2009" name="PLoS Genet.">
        <title>Organised genome dynamics in the Escherichia coli species results in highly diverse adaptive paths.</title>
        <authorList>
            <person name="Touchon M."/>
            <person name="Hoede C."/>
            <person name="Tenaillon O."/>
            <person name="Barbe V."/>
            <person name="Baeriswyl S."/>
            <person name="Bidet P."/>
            <person name="Bingen E."/>
            <person name="Bonacorsi S."/>
            <person name="Bouchier C."/>
            <person name="Bouvet O."/>
            <person name="Calteau A."/>
            <person name="Chiapello H."/>
            <person name="Clermont O."/>
            <person name="Cruveiller S."/>
            <person name="Danchin A."/>
            <person name="Diard M."/>
            <person name="Dossat C."/>
            <person name="Karoui M.E."/>
            <person name="Frapy E."/>
            <person name="Garry L."/>
            <person name="Ghigo J.M."/>
            <person name="Gilles A.M."/>
            <person name="Johnson J."/>
            <person name="Le Bouguenec C."/>
            <person name="Lescat M."/>
            <person name="Mangenot S."/>
            <person name="Martinez-Jehanne V."/>
            <person name="Matic I."/>
            <person name="Nassif X."/>
            <person name="Oztas S."/>
            <person name="Petit M.A."/>
            <person name="Pichon C."/>
            <person name="Rouy Z."/>
            <person name="Ruf C.S."/>
            <person name="Schneider D."/>
            <person name="Tourret J."/>
            <person name="Vacherie B."/>
            <person name="Vallenet D."/>
            <person name="Medigue C."/>
            <person name="Rocha E.P.C."/>
            <person name="Denamur E."/>
        </authorList>
    </citation>
    <scope>NUCLEOTIDE SEQUENCE [LARGE SCALE GENOMIC DNA]</scope>
    <source>
        <strain>ED1a</strain>
    </source>
</reference>
<organism>
    <name type="scientific">Escherichia coli O81 (strain ED1a)</name>
    <dbReference type="NCBI Taxonomy" id="585397"/>
    <lineage>
        <taxon>Bacteria</taxon>
        <taxon>Pseudomonadati</taxon>
        <taxon>Pseudomonadota</taxon>
        <taxon>Gammaproteobacteria</taxon>
        <taxon>Enterobacterales</taxon>
        <taxon>Enterobacteriaceae</taxon>
        <taxon>Escherichia</taxon>
    </lineage>
</organism>
<name>YIDC_ECO81</name>
<sequence>MDSQRNLLVIALLFVSFMIWQAWEQDKNPQPQAQQTTQTTTTAAGSAADQGVPASGQGKLISVKTDVLDLTINTRGGDVEQALLPAYPKELNSTQPFQLLETSPQFIYQAQSGLTGRDGPDNPANGPRPLYNVEKDAYVLAEGQNELQVPMTYTDAAGNTFTKTFVLKRGDYAVNVNYNVQNAGEKPLEISTFGQLKQSITLPPHLDTGSSNFALHTFRGAAYSTPDEKYEKYKFDTIADNENLNISSKGGWVAMLQQYFATAWIPHNDGTNNFYTANLGNGIAAIGYKSQPVLVQPGQTGAMNSTLWVGPEIQDKMAAVAPHLDLTVDYGWLWFISQPLFKLLKWIHSFVGNWGFSIIIITFIVRGIMYPLTKAQYTSMAKMRMLQPKIQAMRERLGDDKQRISQEMMALYKAEKVNPLGGCFPLLIQMPIFLALYYMLMGSVELRQAPFALWIHDLSAQDPYYILPILMGVTMFFIQKMSPTTVTDPMQQKIMTFMPVIFTVFFLWFPSGLVLYYIVSNLVTIIQQQLIYRGLEKRGLHSREKKKS</sequence>
<protein>
    <recommendedName>
        <fullName evidence="1">Membrane protein insertase YidC</fullName>
    </recommendedName>
    <alternativeName>
        <fullName evidence="1">Foldase YidC</fullName>
    </alternativeName>
    <alternativeName>
        <fullName evidence="1">Membrane integrase YidC</fullName>
    </alternativeName>
    <alternativeName>
        <fullName evidence="1">Membrane protein YidC</fullName>
    </alternativeName>
</protein>
<accession>B7N210</accession>
<comment type="function">
    <text evidence="1">Required for the insertion and/or proper folding and/or complex formation of integral membrane proteins into the membrane. Involved in integration of membrane proteins that insert both dependently and independently of the Sec translocase complex, as well as at least some lipoproteins. Aids folding of multispanning membrane proteins.</text>
</comment>
<comment type="subunit">
    <text evidence="1">Interacts with the Sec translocase complex via SecD. Specifically interacts with transmembrane segments of nascent integral membrane proteins during membrane integration.</text>
</comment>
<comment type="subcellular location">
    <subcellularLocation>
        <location evidence="1">Cell inner membrane</location>
        <topology evidence="1">Multi-pass membrane protein</topology>
    </subcellularLocation>
</comment>
<comment type="similarity">
    <text evidence="1">Belongs to the OXA1/ALB3/YidC family. Type 1 subfamily.</text>
</comment>
<feature type="chain" id="PRO_1000187660" description="Membrane protein insertase YidC">
    <location>
        <begin position="1"/>
        <end position="548"/>
    </location>
</feature>
<feature type="transmembrane region" description="Helical" evidence="1">
    <location>
        <begin position="6"/>
        <end position="26"/>
    </location>
</feature>
<feature type="transmembrane region" description="Helical" evidence="1">
    <location>
        <begin position="350"/>
        <end position="370"/>
    </location>
</feature>
<feature type="transmembrane region" description="Helical" evidence="1">
    <location>
        <begin position="420"/>
        <end position="440"/>
    </location>
</feature>
<feature type="transmembrane region" description="Helical" evidence="1">
    <location>
        <begin position="458"/>
        <end position="478"/>
    </location>
</feature>
<feature type="transmembrane region" description="Helical" evidence="1">
    <location>
        <begin position="499"/>
        <end position="519"/>
    </location>
</feature>
<feature type="region of interest" description="Disordered" evidence="2">
    <location>
        <begin position="28"/>
        <end position="55"/>
    </location>
</feature>
<feature type="compositionally biased region" description="Low complexity" evidence="2">
    <location>
        <begin position="30"/>
        <end position="50"/>
    </location>
</feature>
<gene>
    <name evidence="1" type="primary">yidC</name>
    <name type="ordered locus">ECED1_4397</name>
</gene>